<sequence>MNYEFEREIGFINSQPSLAECLTSFPPVGDTFQSSSIKNSTLSHSTVIPPPFEQTIPSLNPSSHPRQSRPKQSPNGTSPLPAATLPPEYPWMKEKKNSKKNHLPASSGPAASCLSQKETHEIPDNTGGGSRRLRTAYTNTQLLELEKEFHFNKYLCRPRRVEIAALLDLTERQVKVWFQNRRMKHKRQTQCKENQNGDGKFKNLEDSGQTEDDEEKSLFEQGINNVTGALLDREGYTFQSNALTQQQAQNLHNGESQSFPVSPLPSNEKNLKHFHQQSPTVQNCLSTMAQNCAAGLNNDSPEALDVPSLQDFNVFSTESCLQLSDGVSPSLPGSLDSPVDLSADSFDFFTDTLTTIDLQHLNY</sequence>
<reference key="1">
    <citation type="journal article" date="2000" name="Proc. Natl. Acad. Sci. U.S.A.">
        <title>Hox cluster genomics in the horn shark, Heterodontus francisci.</title>
        <authorList>
            <person name="Kim C.B."/>
            <person name="Amemiya C."/>
            <person name="Bailey W."/>
            <person name="Kawasaki K."/>
            <person name="Mezey J."/>
            <person name="Miller W."/>
            <person name="Minoshima S."/>
            <person name="Shimizu N."/>
            <person name="Wagner G."/>
            <person name="Ruddle F."/>
        </authorList>
    </citation>
    <scope>NUCLEOTIDE SEQUENCE [GENOMIC DNA]</scope>
</reference>
<dbReference type="EMBL" id="AF224262">
    <property type="protein sequence ID" value="AAF44640.1"/>
    <property type="molecule type" value="Genomic_DNA"/>
</dbReference>
<dbReference type="SMR" id="Q9IA20"/>
<dbReference type="GO" id="GO:0005634">
    <property type="term" value="C:nucleus"/>
    <property type="evidence" value="ECO:0007669"/>
    <property type="project" value="UniProtKB-SubCell"/>
</dbReference>
<dbReference type="GO" id="GO:0000981">
    <property type="term" value="F:DNA-binding transcription factor activity, RNA polymerase II-specific"/>
    <property type="evidence" value="ECO:0007669"/>
    <property type="project" value="InterPro"/>
</dbReference>
<dbReference type="GO" id="GO:0000978">
    <property type="term" value="F:RNA polymerase II cis-regulatory region sequence-specific DNA binding"/>
    <property type="evidence" value="ECO:0007669"/>
    <property type="project" value="TreeGrafter"/>
</dbReference>
<dbReference type="CDD" id="cd00086">
    <property type="entry name" value="homeodomain"/>
    <property type="match status" value="1"/>
</dbReference>
<dbReference type="FunFam" id="1.10.10.60:FF:000145">
    <property type="entry name" value="homeobox protein Hox-A2"/>
    <property type="match status" value="1"/>
</dbReference>
<dbReference type="Gene3D" id="1.10.10.60">
    <property type="entry name" value="Homeodomain-like"/>
    <property type="match status" value="1"/>
</dbReference>
<dbReference type="InterPro" id="IPR001356">
    <property type="entry name" value="HD"/>
</dbReference>
<dbReference type="InterPro" id="IPR020479">
    <property type="entry name" value="HD_metazoa"/>
</dbReference>
<dbReference type="InterPro" id="IPR001827">
    <property type="entry name" value="Homeobox_Antennapedia_CS"/>
</dbReference>
<dbReference type="InterPro" id="IPR017970">
    <property type="entry name" value="Homeobox_CS"/>
</dbReference>
<dbReference type="InterPro" id="IPR009057">
    <property type="entry name" value="Homeodomain-like_sf"/>
</dbReference>
<dbReference type="PANTHER" id="PTHR45664:SF3">
    <property type="entry name" value="HOMEOBOX PROTEIN HOX-A2"/>
    <property type="match status" value="1"/>
</dbReference>
<dbReference type="PANTHER" id="PTHR45664">
    <property type="entry name" value="PROTEIN ZERKNUELLT 1-RELATED"/>
    <property type="match status" value="1"/>
</dbReference>
<dbReference type="Pfam" id="PF00046">
    <property type="entry name" value="Homeodomain"/>
    <property type="match status" value="1"/>
</dbReference>
<dbReference type="PRINTS" id="PR00024">
    <property type="entry name" value="HOMEOBOX"/>
</dbReference>
<dbReference type="SMART" id="SM00389">
    <property type="entry name" value="HOX"/>
    <property type="match status" value="1"/>
</dbReference>
<dbReference type="SUPFAM" id="SSF46689">
    <property type="entry name" value="Homeodomain-like"/>
    <property type="match status" value="1"/>
</dbReference>
<dbReference type="PROSITE" id="PS00032">
    <property type="entry name" value="ANTENNAPEDIA"/>
    <property type="match status" value="1"/>
</dbReference>
<dbReference type="PROSITE" id="PS00027">
    <property type="entry name" value="HOMEOBOX_1"/>
    <property type="match status" value="1"/>
</dbReference>
<dbReference type="PROSITE" id="PS50071">
    <property type="entry name" value="HOMEOBOX_2"/>
    <property type="match status" value="1"/>
</dbReference>
<organism>
    <name type="scientific">Heterodontus francisci</name>
    <name type="common">Horn shark</name>
    <name type="synonym">Cestracion francisci</name>
    <dbReference type="NCBI Taxonomy" id="7792"/>
    <lineage>
        <taxon>Eukaryota</taxon>
        <taxon>Metazoa</taxon>
        <taxon>Chordata</taxon>
        <taxon>Craniata</taxon>
        <taxon>Vertebrata</taxon>
        <taxon>Chondrichthyes</taxon>
        <taxon>Elasmobranchii</taxon>
        <taxon>Galeomorphii</taxon>
        <taxon>Heterodontoidea</taxon>
        <taxon>Heterodontiformes</taxon>
        <taxon>Heterodontidae</taxon>
        <taxon>Heterodontus</taxon>
    </lineage>
</organism>
<keyword id="KW-0217">Developmental protein</keyword>
<keyword id="KW-0238">DNA-binding</keyword>
<keyword id="KW-0371">Homeobox</keyword>
<keyword id="KW-0539">Nucleus</keyword>
<keyword id="KW-0804">Transcription</keyword>
<keyword id="KW-0805">Transcription regulation</keyword>
<protein>
    <recommendedName>
        <fullName>Homeobox protein Hox-A2</fullName>
    </recommendedName>
</protein>
<evidence type="ECO:0000250" key="1"/>
<evidence type="ECO:0000255" key="2">
    <source>
        <dbReference type="PROSITE-ProRule" id="PRU00108"/>
    </source>
</evidence>
<evidence type="ECO:0000256" key="3">
    <source>
        <dbReference type="SAM" id="MobiDB-lite"/>
    </source>
</evidence>
<evidence type="ECO:0000305" key="4"/>
<accession>Q9IA20</accession>
<proteinExistence type="inferred from homology"/>
<comment type="function">
    <text evidence="1">Sequence-specific transcription factor which is part of a developmental regulatory system that provides cells with specific positional identities on the anterior-posterior axis.</text>
</comment>
<comment type="subcellular location">
    <subcellularLocation>
        <location evidence="2">Nucleus</location>
    </subcellularLocation>
</comment>
<comment type="similarity">
    <text evidence="4">Belongs to the Antp homeobox family. Proboscipedia subfamily.</text>
</comment>
<gene>
    <name type="primary">HOXA2</name>
</gene>
<feature type="chain" id="PRO_0000200041" description="Homeobox protein Hox-A2">
    <location>
        <begin position="1"/>
        <end position="363"/>
    </location>
</feature>
<feature type="DNA-binding region" description="Homeobox" evidence="2">
    <location>
        <begin position="130"/>
        <end position="189"/>
    </location>
</feature>
<feature type="region of interest" description="Disordered" evidence="3">
    <location>
        <begin position="23"/>
        <end position="133"/>
    </location>
</feature>
<feature type="region of interest" description="Disordered" evidence="3">
    <location>
        <begin position="183"/>
        <end position="216"/>
    </location>
</feature>
<feature type="short sequence motif" description="Antp-type hexapeptide">
    <location>
        <begin position="88"/>
        <end position="93"/>
    </location>
</feature>
<feature type="compositionally biased region" description="Polar residues" evidence="3">
    <location>
        <begin position="31"/>
        <end position="46"/>
    </location>
</feature>
<feature type="compositionally biased region" description="Polar residues" evidence="3">
    <location>
        <begin position="55"/>
        <end position="78"/>
    </location>
</feature>
<name>HXA2_HETFR</name>